<accession>Q7NR81</accession>
<proteinExistence type="inferred from homology"/>
<keyword id="KW-0227">DNA damage</keyword>
<keyword id="KW-0234">DNA repair</keyword>
<keyword id="KW-0235">DNA replication</keyword>
<keyword id="KW-0436">Ligase</keyword>
<keyword id="KW-0460">Magnesium</keyword>
<keyword id="KW-0464">Manganese</keyword>
<keyword id="KW-0479">Metal-binding</keyword>
<keyword id="KW-0520">NAD</keyword>
<keyword id="KW-1185">Reference proteome</keyword>
<keyword id="KW-0862">Zinc</keyword>
<name>DNLJ_CHRVO</name>
<protein>
    <recommendedName>
        <fullName evidence="1">DNA ligase</fullName>
        <ecNumber evidence="1">6.5.1.2</ecNumber>
    </recommendedName>
    <alternativeName>
        <fullName evidence="1">Polydeoxyribonucleotide synthase [NAD(+)]</fullName>
    </alternativeName>
</protein>
<evidence type="ECO:0000255" key="1">
    <source>
        <dbReference type="HAMAP-Rule" id="MF_01588"/>
    </source>
</evidence>
<organism>
    <name type="scientific">Chromobacterium violaceum (strain ATCC 12472 / DSM 30191 / JCM 1249 / CCUG 213 / NBRC 12614 / NCIMB 9131 / NCTC 9757 / MK)</name>
    <dbReference type="NCBI Taxonomy" id="243365"/>
    <lineage>
        <taxon>Bacteria</taxon>
        <taxon>Pseudomonadati</taxon>
        <taxon>Pseudomonadota</taxon>
        <taxon>Betaproteobacteria</taxon>
        <taxon>Neisseriales</taxon>
        <taxon>Chromobacteriaceae</taxon>
        <taxon>Chromobacterium</taxon>
    </lineage>
</organism>
<feature type="chain" id="PRO_0000313188" description="DNA ligase">
    <location>
        <begin position="1"/>
        <end position="821"/>
    </location>
</feature>
<feature type="domain" description="BRCT" evidence="1">
    <location>
        <begin position="742"/>
        <end position="821"/>
    </location>
</feature>
<feature type="active site" description="N6-AMP-lysine intermediate" evidence="1">
    <location>
        <position position="142"/>
    </location>
</feature>
<feature type="binding site" evidence="1">
    <location>
        <begin position="50"/>
        <end position="54"/>
    </location>
    <ligand>
        <name>NAD(+)</name>
        <dbReference type="ChEBI" id="CHEBI:57540"/>
    </ligand>
</feature>
<feature type="binding site" evidence="1">
    <location>
        <begin position="99"/>
        <end position="100"/>
    </location>
    <ligand>
        <name>NAD(+)</name>
        <dbReference type="ChEBI" id="CHEBI:57540"/>
    </ligand>
</feature>
<feature type="binding site" evidence="1">
    <location>
        <position position="140"/>
    </location>
    <ligand>
        <name>NAD(+)</name>
        <dbReference type="ChEBI" id="CHEBI:57540"/>
    </ligand>
</feature>
<feature type="binding site" evidence="1">
    <location>
        <position position="163"/>
    </location>
    <ligand>
        <name>NAD(+)</name>
        <dbReference type="ChEBI" id="CHEBI:57540"/>
    </ligand>
</feature>
<feature type="binding site" evidence="1">
    <location>
        <position position="200"/>
    </location>
    <ligand>
        <name>NAD(+)</name>
        <dbReference type="ChEBI" id="CHEBI:57540"/>
    </ligand>
</feature>
<feature type="binding site" evidence="1">
    <location>
        <position position="319"/>
    </location>
    <ligand>
        <name>NAD(+)</name>
        <dbReference type="ChEBI" id="CHEBI:57540"/>
    </ligand>
</feature>
<feature type="binding site" evidence="1">
    <location>
        <position position="343"/>
    </location>
    <ligand>
        <name>NAD(+)</name>
        <dbReference type="ChEBI" id="CHEBI:57540"/>
    </ligand>
</feature>
<feature type="binding site" evidence="1">
    <location>
        <position position="452"/>
    </location>
    <ligand>
        <name>Zn(2+)</name>
        <dbReference type="ChEBI" id="CHEBI:29105"/>
    </ligand>
</feature>
<feature type="binding site" evidence="1">
    <location>
        <position position="455"/>
    </location>
    <ligand>
        <name>Zn(2+)</name>
        <dbReference type="ChEBI" id="CHEBI:29105"/>
    </ligand>
</feature>
<feature type="binding site" evidence="1">
    <location>
        <position position="470"/>
    </location>
    <ligand>
        <name>Zn(2+)</name>
        <dbReference type="ChEBI" id="CHEBI:29105"/>
    </ligand>
</feature>
<feature type="binding site" evidence="1">
    <location>
        <position position="476"/>
    </location>
    <ligand>
        <name>Zn(2+)</name>
        <dbReference type="ChEBI" id="CHEBI:29105"/>
    </ligand>
</feature>
<comment type="function">
    <text evidence="1">DNA ligase that catalyzes the formation of phosphodiester linkages between 5'-phosphoryl and 3'-hydroxyl groups in double-stranded DNA using NAD as a coenzyme and as the energy source for the reaction. It is essential for DNA replication and repair of damaged DNA.</text>
</comment>
<comment type="catalytic activity">
    <reaction evidence="1">
        <text>NAD(+) + (deoxyribonucleotide)n-3'-hydroxyl + 5'-phospho-(deoxyribonucleotide)m = (deoxyribonucleotide)n+m + AMP + beta-nicotinamide D-nucleotide.</text>
        <dbReference type="EC" id="6.5.1.2"/>
    </reaction>
</comment>
<comment type="cofactor">
    <cofactor evidence="1">
        <name>Mg(2+)</name>
        <dbReference type="ChEBI" id="CHEBI:18420"/>
    </cofactor>
    <cofactor evidence="1">
        <name>Mn(2+)</name>
        <dbReference type="ChEBI" id="CHEBI:29035"/>
    </cofactor>
</comment>
<comment type="similarity">
    <text evidence="1">Belongs to the NAD-dependent DNA ligase family. LigA subfamily.</text>
</comment>
<dbReference type="EC" id="6.5.1.2" evidence="1"/>
<dbReference type="EMBL" id="AE016825">
    <property type="protein sequence ID" value="AAQ61564.1"/>
    <property type="molecule type" value="Genomic_DNA"/>
</dbReference>
<dbReference type="SMR" id="Q7NR81"/>
<dbReference type="STRING" id="243365.CV_3903"/>
<dbReference type="KEGG" id="cvi:CV_3903"/>
<dbReference type="eggNOG" id="COG0272">
    <property type="taxonomic scope" value="Bacteria"/>
</dbReference>
<dbReference type="HOGENOM" id="CLU_007764_2_1_4"/>
<dbReference type="Proteomes" id="UP000001424">
    <property type="component" value="Chromosome"/>
</dbReference>
<dbReference type="GO" id="GO:0005829">
    <property type="term" value="C:cytosol"/>
    <property type="evidence" value="ECO:0007669"/>
    <property type="project" value="TreeGrafter"/>
</dbReference>
<dbReference type="GO" id="GO:0003911">
    <property type="term" value="F:DNA ligase (NAD+) activity"/>
    <property type="evidence" value="ECO:0007669"/>
    <property type="project" value="UniProtKB-UniRule"/>
</dbReference>
<dbReference type="GO" id="GO:0046872">
    <property type="term" value="F:metal ion binding"/>
    <property type="evidence" value="ECO:0007669"/>
    <property type="project" value="UniProtKB-KW"/>
</dbReference>
<dbReference type="GO" id="GO:0006281">
    <property type="term" value="P:DNA repair"/>
    <property type="evidence" value="ECO:0007669"/>
    <property type="project" value="UniProtKB-KW"/>
</dbReference>
<dbReference type="GO" id="GO:0006260">
    <property type="term" value="P:DNA replication"/>
    <property type="evidence" value="ECO:0007669"/>
    <property type="project" value="UniProtKB-KW"/>
</dbReference>
<dbReference type="CDD" id="cd17748">
    <property type="entry name" value="BRCT_DNA_ligase_like"/>
    <property type="match status" value="1"/>
</dbReference>
<dbReference type="CDD" id="cd00114">
    <property type="entry name" value="LIGANc"/>
    <property type="match status" value="1"/>
</dbReference>
<dbReference type="FunFam" id="1.10.287.610:FF:000002">
    <property type="entry name" value="DNA ligase"/>
    <property type="match status" value="1"/>
</dbReference>
<dbReference type="FunFam" id="2.40.50.140:FF:000012">
    <property type="entry name" value="DNA ligase"/>
    <property type="match status" value="1"/>
</dbReference>
<dbReference type="FunFam" id="3.30.470.30:FF:000001">
    <property type="entry name" value="DNA ligase"/>
    <property type="match status" value="1"/>
</dbReference>
<dbReference type="FunFam" id="3.40.50.10190:FF:000054">
    <property type="entry name" value="DNA ligase"/>
    <property type="match status" value="1"/>
</dbReference>
<dbReference type="Gene3D" id="6.20.10.30">
    <property type="match status" value="1"/>
</dbReference>
<dbReference type="Gene3D" id="1.10.150.20">
    <property type="entry name" value="5' to 3' exonuclease, C-terminal subdomain"/>
    <property type="match status" value="2"/>
</dbReference>
<dbReference type="Gene3D" id="3.40.50.10190">
    <property type="entry name" value="BRCT domain"/>
    <property type="match status" value="1"/>
</dbReference>
<dbReference type="Gene3D" id="3.30.470.30">
    <property type="entry name" value="DNA ligase/mRNA capping enzyme"/>
    <property type="match status" value="1"/>
</dbReference>
<dbReference type="Gene3D" id="1.10.287.610">
    <property type="entry name" value="Helix hairpin bin"/>
    <property type="match status" value="1"/>
</dbReference>
<dbReference type="Gene3D" id="2.40.50.140">
    <property type="entry name" value="Nucleic acid-binding proteins"/>
    <property type="match status" value="1"/>
</dbReference>
<dbReference type="HAMAP" id="MF_01588">
    <property type="entry name" value="DNA_ligase_A"/>
    <property type="match status" value="1"/>
</dbReference>
<dbReference type="InterPro" id="IPR001357">
    <property type="entry name" value="BRCT_dom"/>
</dbReference>
<dbReference type="InterPro" id="IPR036420">
    <property type="entry name" value="BRCT_dom_sf"/>
</dbReference>
<dbReference type="InterPro" id="IPR041663">
    <property type="entry name" value="DisA/LigA_HHH"/>
</dbReference>
<dbReference type="InterPro" id="IPR001679">
    <property type="entry name" value="DNA_ligase"/>
</dbReference>
<dbReference type="InterPro" id="IPR033136">
    <property type="entry name" value="DNA_ligase_CS"/>
</dbReference>
<dbReference type="InterPro" id="IPR013839">
    <property type="entry name" value="DNAligase_adenylation"/>
</dbReference>
<dbReference type="InterPro" id="IPR013840">
    <property type="entry name" value="DNAligase_N"/>
</dbReference>
<dbReference type="InterPro" id="IPR012340">
    <property type="entry name" value="NA-bd_OB-fold"/>
</dbReference>
<dbReference type="InterPro" id="IPR004150">
    <property type="entry name" value="NAD_DNA_ligase_OB"/>
</dbReference>
<dbReference type="InterPro" id="IPR010994">
    <property type="entry name" value="RuvA_2-like"/>
</dbReference>
<dbReference type="InterPro" id="IPR004149">
    <property type="entry name" value="Znf_DNAligase_C4"/>
</dbReference>
<dbReference type="NCBIfam" id="TIGR00575">
    <property type="entry name" value="dnlj"/>
    <property type="match status" value="1"/>
</dbReference>
<dbReference type="NCBIfam" id="NF005932">
    <property type="entry name" value="PRK07956.1"/>
    <property type="match status" value="1"/>
</dbReference>
<dbReference type="PANTHER" id="PTHR23389">
    <property type="entry name" value="CHROMOSOME TRANSMISSION FIDELITY FACTOR 18"/>
    <property type="match status" value="1"/>
</dbReference>
<dbReference type="PANTHER" id="PTHR23389:SF9">
    <property type="entry name" value="DNA LIGASE"/>
    <property type="match status" value="1"/>
</dbReference>
<dbReference type="Pfam" id="PF00533">
    <property type="entry name" value="BRCT"/>
    <property type="match status" value="1"/>
</dbReference>
<dbReference type="Pfam" id="PF01653">
    <property type="entry name" value="DNA_ligase_aden"/>
    <property type="match status" value="1"/>
</dbReference>
<dbReference type="Pfam" id="PF03120">
    <property type="entry name" value="DNA_ligase_OB"/>
    <property type="match status" value="1"/>
</dbReference>
<dbReference type="Pfam" id="PF03119">
    <property type="entry name" value="DNA_ligase_ZBD"/>
    <property type="match status" value="1"/>
</dbReference>
<dbReference type="Pfam" id="PF12826">
    <property type="entry name" value="HHH_2"/>
    <property type="match status" value="1"/>
</dbReference>
<dbReference type="PIRSF" id="PIRSF001604">
    <property type="entry name" value="LigA"/>
    <property type="match status" value="1"/>
</dbReference>
<dbReference type="SMART" id="SM00292">
    <property type="entry name" value="BRCT"/>
    <property type="match status" value="1"/>
</dbReference>
<dbReference type="SMART" id="SM00532">
    <property type="entry name" value="LIGANc"/>
    <property type="match status" value="1"/>
</dbReference>
<dbReference type="SUPFAM" id="SSF52113">
    <property type="entry name" value="BRCT domain"/>
    <property type="match status" value="1"/>
</dbReference>
<dbReference type="SUPFAM" id="SSF56091">
    <property type="entry name" value="DNA ligase/mRNA capping enzyme, catalytic domain"/>
    <property type="match status" value="1"/>
</dbReference>
<dbReference type="SUPFAM" id="SSF50249">
    <property type="entry name" value="Nucleic acid-binding proteins"/>
    <property type="match status" value="1"/>
</dbReference>
<dbReference type="SUPFAM" id="SSF47781">
    <property type="entry name" value="RuvA domain 2-like"/>
    <property type="match status" value="1"/>
</dbReference>
<dbReference type="PROSITE" id="PS50172">
    <property type="entry name" value="BRCT"/>
    <property type="match status" value="1"/>
</dbReference>
<dbReference type="PROSITE" id="PS01056">
    <property type="entry name" value="DNA_LIGASE_N2"/>
    <property type="match status" value="1"/>
</dbReference>
<sequence length="821" mass="88506">MTIPGAGFAGPFAVREFPMTANELRAAELRELLNRYGHEYYVLDAPTVPDAEYDRLFRELQALEEAHPELAVSDSPTRRVGGAPLDEFVSVVHAVPMLSLSNAFSDMQLTDPAERHSELIQFDERVRKGLDAAEVEYATEPKFDGLAISLLYENGVLTRAATRGDGVAGEQVTENVRTIRAIPLKLDGANPPALLEVRGEVLMLKRDFERLNADQIARGDKTFANPRNAAAGSLRQLDSRITAQRRLSFFAYSIAQVGGADWPATHAGEMAWLKTLGFPVVMDSLRPVVSGAAGLAGYYEAVLTARAGLPFEIDGVVYKVNRRDQQEALGFVSRAPRWAIAHKFPAEEALTCVEAIEEQVGRTGAITPVARLKPVFVGGVTVTNATLHNEDEVRRKDVRVGDTVVVRRAGDVIPEVVSVVLAQRPMQPAEGGDLFSAGEEPRYPAYRLPTACPVCGSHVVREEGEAIARCSGGLSCRAQRSQAIQHFAGRRMMDIDGLGERYIDKLVEYGYVQGVADLYRLKLEDLLEMKRRADEDEGVTPETVKAGKVASKWAENLIEAIDASRAPPLARLLFALGIRHVGESTAKTLADWLGTMALIRRCPAALFAALPDIGGVVADSLADFFAEDNNEKALDALLAEVKPADEHAPSPKLRERLDDASLLARLAIPRLTEVRSQQLAAQRSLAWLGQSERRALLALELPAEVVNALADWLDEPGRRAALASLAGLRDEILASLPAAAEAAALPLEGKTLVLTGTLPTLSRDQAKALIEAAGGKVSGSVSKKTHYVVAGEEAGGKLAKAQELGVAILDEAGLQALLAGN</sequence>
<gene>
    <name evidence="1" type="primary">ligA</name>
    <name type="ordered locus">CV_3903</name>
</gene>
<reference key="1">
    <citation type="journal article" date="2003" name="Proc. Natl. Acad. Sci. U.S.A.">
        <title>The complete genome sequence of Chromobacterium violaceum reveals remarkable and exploitable bacterial adaptability.</title>
        <authorList>
            <person name="Vasconcelos A.T.R."/>
            <person name="de Almeida D.F."/>
            <person name="Hungria M."/>
            <person name="Guimaraes C.T."/>
            <person name="Antonio R.V."/>
            <person name="Almeida F.C."/>
            <person name="de Almeida L.G.P."/>
            <person name="de Almeida R."/>
            <person name="Alves-Gomes J.A."/>
            <person name="Andrade E.M."/>
            <person name="Araripe J."/>
            <person name="de Araujo M.F.F."/>
            <person name="Astolfi-Filho S."/>
            <person name="Azevedo V."/>
            <person name="Baptista A.J."/>
            <person name="Bataus L.A.M."/>
            <person name="Batista J.S."/>
            <person name="Belo A."/>
            <person name="van den Berg C."/>
            <person name="Bogo M."/>
            <person name="Bonatto S."/>
            <person name="Bordignon J."/>
            <person name="Brigido M.M."/>
            <person name="Brito C.A."/>
            <person name="Brocchi M."/>
            <person name="Burity H.A."/>
            <person name="Camargo A.A."/>
            <person name="Cardoso D.D.P."/>
            <person name="Carneiro N.P."/>
            <person name="Carraro D.M."/>
            <person name="Carvalho C.M.B."/>
            <person name="Cascardo J.C.M."/>
            <person name="Cavada B.S."/>
            <person name="Chueire L.M.O."/>
            <person name="Creczynski-Pasa T.B."/>
            <person name="Cunha-Junior N.C."/>
            <person name="Fagundes N."/>
            <person name="Falcao C.L."/>
            <person name="Fantinatti F."/>
            <person name="Farias I.P."/>
            <person name="Felipe M.S.S."/>
            <person name="Ferrari L.P."/>
            <person name="Ferro J.A."/>
            <person name="Ferro M.I.T."/>
            <person name="Franco G.R."/>
            <person name="Freitas N.S.A."/>
            <person name="Furlan L.R."/>
            <person name="Gazzinelli R.T."/>
            <person name="Gomes E.A."/>
            <person name="Goncalves P.R."/>
            <person name="Grangeiro T.B."/>
            <person name="Grattapaglia D."/>
            <person name="Grisard E.C."/>
            <person name="Hanna E.S."/>
            <person name="Jardim S.N."/>
            <person name="Laurino J."/>
            <person name="Leoi L.C.T."/>
            <person name="Lima L.F.A."/>
            <person name="Loureiro M.F."/>
            <person name="Lyra M.C.C.P."/>
            <person name="Madeira H.M.F."/>
            <person name="Manfio G.P."/>
            <person name="Maranhao A.Q."/>
            <person name="Martins W.S."/>
            <person name="di Mauro S.M.Z."/>
            <person name="de Medeiros S.R.B."/>
            <person name="Meissner R.V."/>
            <person name="Moreira M.A.M."/>
            <person name="Nascimento F.F."/>
            <person name="Nicolas M.F."/>
            <person name="Oliveira J.G."/>
            <person name="Oliveira S.C."/>
            <person name="Paixao R.F.C."/>
            <person name="Parente J.A."/>
            <person name="Pedrosa F.O."/>
            <person name="Pena S.D.J."/>
            <person name="Pereira J.O."/>
            <person name="Pereira M."/>
            <person name="Pinto L.S.R.C."/>
            <person name="Pinto L.S."/>
            <person name="Porto J.I.R."/>
            <person name="Potrich D.P."/>
            <person name="Ramalho-Neto C.E."/>
            <person name="Reis A.M.M."/>
            <person name="Rigo L.U."/>
            <person name="Rondinelli E."/>
            <person name="Santos E.B.P."/>
            <person name="Santos F.R."/>
            <person name="Schneider M.P.C."/>
            <person name="Seuanez H.N."/>
            <person name="Silva A.M.R."/>
            <person name="da Silva A.L.C."/>
            <person name="Silva D.W."/>
            <person name="Silva R."/>
            <person name="Simoes I.C."/>
            <person name="Simon D."/>
            <person name="Soares C.M.A."/>
            <person name="Soares R.B.A."/>
            <person name="Souza E.M."/>
            <person name="Souza K.R.L."/>
            <person name="Souza R.C."/>
            <person name="Steffens M.B.R."/>
            <person name="Steindel M."/>
            <person name="Teixeira S.R."/>
            <person name="Urmenyi T."/>
            <person name="Vettore A."/>
            <person name="Wassem R."/>
            <person name="Zaha A."/>
            <person name="Simpson A.J.G."/>
        </authorList>
    </citation>
    <scope>NUCLEOTIDE SEQUENCE [LARGE SCALE GENOMIC DNA]</scope>
    <source>
        <strain>ATCC 12472 / DSM 30191 / JCM 1249 / CCUG 213 / NBRC 12614 / NCIMB 9131 / NCTC 9757 / MK</strain>
    </source>
</reference>